<organism>
    <name type="scientific">Vanderwaltozyma polyspora (strain ATCC 22028 / DSM 70294 / BCRC 21397 / CBS 2163 / NBRC 10782 / NRRL Y-8283 / UCD 57-17)</name>
    <name type="common">Kluyveromyces polysporus</name>
    <dbReference type="NCBI Taxonomy" id="436907"/>
    <lineage>
        <taxon>Eukaryota</taxon>
        <taxon>Fungi</taxon>
        <taxon>Dikarya</taxon>
        <taxon>Ascomycota</taxon>
        <taxon>Saccharomycotina</taxon>
        <taxon>Saccharomycetes</taxon>
        <taxon>Saccharomycetales</taxon>
        <taxon>Saccharomycetaceae</taxon>
        <taxon>Vanderwaltozyma</taxon>
    </lineage>
</organism>
<reference key="1">
    <citation type="journal article" date="2007" name="Proc. Natl. Acad. Sci. U.S.A.">
        <title>Independent sorting-out of thousands of duplicated gene pairs in two yeast species descended from a whole-genome duplication.</title>
        <authorList>
            <person name="Scannell D.R."/>
            <person name="Frank A.C."/>
            <person name="Conant G.C."/>
            <person name="Byrne K.P."/>
            <person name="Woolfit M."/>
            <person name="Wolfe K.H."/>
        </authorList>
    </citation>
    <scope>NUCLEOTIDE SEQUENCE [LARGE SCALE GENOMIC DNA]</scope>
    <source>
        <strain>ATCC 22028 / DSM 70294 / BCRC 21397 / CBS 2163 / NBRC 10782 / NRRL Y-8283 / UCD 57-17</strain>
    </source>
</reference>
<protein>
    <recommendedName>
        <fullName>Protein YAE1</fullName>
    </recommendedName>
</protein>
<comment type="function">
    <text evidence="2">The complex LTO1:YAE1 may function as a target specific adapter that probably recruits apo-RPLI1 to the cytosolic iron-sulfur protein assembly (CIA) complex machinery. May be required for biogenesis of the large ribosomal subunit and initiation of translation.</text>
</comment>
<comment type="subunit">
    <text evidence="2">May form a complex with LTO1.</text>
</comment>
<comment type="subcellular location">
    <subcellularLocation>
        <location evidence="1">Cytoplasm</location>
    </subcellularLocation>
    <subcellularLocation>
        <location evidence="1">Nucleus</location>
    </subcellularLocation>
</comment>
<comment type="similarity">
    <text evidence="4">Belongs to the YAE1 family.</text>
</comment>
<gene>
    <name type="primary">YAE1</name>
    <name type="ORF">Kpol_1018p176</name>
</gene>
<keyword id="KW-0963">Cytoplasm</keyword>
<keyword id="KW-0539">Nucleus</keyword>
<keyword id="KW-1185">Reference proteome</keyword>
<name>YAE1_VANPO</name>
<feature type="chain" id="PRO_0000324435" description="Protein YAE1">
    <location>
        <begin position="1"/>
        <end position="137"/>
    </location>
</feature>
<feature type="region of interest" description="Disordered" evidence="3">
    <location>
        <begin position="1"/>
        <end position="20"/>
    </location>
</feature>
<feature type="region of interest" description="deca-GX3 motif; required for interaction with LTO1" evidence="1">
    <location>
        <begin position="35"/>
        <end position="75"/>
    </location>
</feature>
<accession>A7TE16</accession>
<dbReference type="EMBL" id="DS480378">
    <property type="protein sequence ID" value="EDO19636.1"/>
    <property type="molecule type" value="Genomic_DNA"/>
</dbReference>
<dbReference type="RefSeq" id="XP_001647494.1">
    <property type="nucleotide sequence ID" value="XM_001647444.1"/>
</dbReference>
<dbReference type="SMR" id="A7TE16"/>
<dbReference type="FunCoup" id="A7TE16">
    <property type="interactions" value="9"/>
</dbReference>
<dbReference type="STRING" id="436907.A7TE16"/>
<dbReference type="GeneID" id="5548002"/>
<dbReference type="KEGG" id="vpo:Kpol_1018p176"/>
<dbReference type="eggNOG" id="KOG4774">
    <property type="taxonomic scope" value="Eukaryota"/>
</dbReference>
<dbReference type="HOGENOM" id="CLU_066684_2_0_1"/>
<dbReference type="InParanoid" id="A7TE16"/>
<dbReference type="OMA" id="CKNNEAP"/>
<dbReference type="OrthoDB" id="20086at2759"/>
<dbReference type="PhylomeDB" id="A7TE16"/>
<dbReference type="Proteomes" id="UP000000267">
    <property type="component" value="Unassembled WGS sequence"/>
</dbReference>
<dbReference type="GO" id="GO:0097361">
    <property type="term" value="C:cytosolic [4Fe-4S] assembly targeting complex"/>
    <property type="evidence" value="ECO:0007669"/>
    <property type="project" value="EnsemblFungi"/>
</dbReference>
<dbReference type="GO" id="GO:0005634">
    <property type="term" value="C:nucleus"/>
    <property type="evidence" value="ECO:0007669"/>
    <property type="project" value="UniProtKB-SubCell"/>
</dbReference>
<dbReference type="GO" id="GO:0062092">
    <property type="term" value="C:Yae1-Lto1 complex"/>
    <property type="evidence" value="ECO:0007669"/>
    <property type="project" value="EnsemblFungi"/>
</dbReference>
<dbReference type="GO" id="GO:0030674">
    <property type="term" value="F:protein-macromolecule adaptor activity"/>
    <property type="evidence" value="ECO:0007669"/>
    <property type="project" value="EnsemblFungi"/>
</dbReference>
<dbReference type="GO" id="GO:0051604">
    <property type="term" value="P:protein maturation"/>
    <property type="evidence" value="ECO:0000250"/>
    <property type="project" value="UniProtKB"/>
</dbReference>
<dbReference type="InterPro" id="IPR019191">
    <property type="entry name" value="Essential_protein_Yae1_N"/>
</dbReference>
<dbReference type="InterPro" id="IPR038881">
    <property type="entry name" value="Yae1-like"/>
</dbReference>
<dbReference type="PANTHER" id="PTHR18829">
    <property type="entry name" value="PROTEIN YAE1 HOMOLOG"/>
    <property type="match status" value="1"/>
</dbReference>
<dbReference type="PANTHER" id="PTHR18829:SF0">
    <property type="entry name" value="PROTEIN YAE1 HOMOLOG"/>
    <property type="match status" value="1"/>
</dbReference>
<dbReference type="Pfam" id="PF09811">
    <property type="entry name" value="Yae1_N"/>
    <property type="match status" value="1"/>
</dbReference>
<proteinExistence type="inferred from homology"/>
<sequence>MGDHFDDVWGSGSENESEGLTNDIKKLREIHNNRGYLDGVTDSKDMNLQNGFDEGFPTGSVLGYTVGELIGTMMSLNAVYVEDEQLKSDLESAQKELRVNEVLTKSMFNEQLDLDGEHPVLLKWKKIVEGYEEKYLK</sequence>
<evidence type="ECO:0000250" key="1">
    <source>
        <dbReference type="UniProtKB" id="P47118"/>
    </source>
</evidence>
<evidence type="ECO:0000250" key="2">
    <source>
        <dbReference type="UniProtKB" id="Q9NRH1"/>
    </source>
</evidence>
<evidence type="ECO:0000256" key="3">
    <source>
        <dbReference type="SAM" id="MobiDB-lite"/>
    </source>
</evidence>
<evidence type="ECO:0000305" key="4"/>